<feature type="propeptide" id="PRO_0000459877" evidence="1">
    <location>
        <begin position="1"/>
        <end position="9"/>
    </location>
</feature>
<feature type="chain" id="PRO_1000017455" description="Large ribosomal subunit protein bL27">
    <location>
        <begin position="10"/>
        <end position="100"/>
    </location>
</feature>
<keyword id="KW-0687">Ribonucleoprotein</keyword>
<keyword id="KW-0689">Ribosomal protein</keyword>
<name>RL27_CLOBL</name>
<proteinExistence type="inferred from homology"/>
<organism>
    <name type="scientific">Clostridium botulinum (strain Langeland / NCTC 10281 / Type F)</name>
    <dbReference type="NCBI Taxonomy" id="441772"/>
    <lineage>
        <taxon>Bacteria</taxon>
        <taxon>Bacillati</taxon>
        <taxon>Bacillota</taxon>
        <taxon>Clostridia</taxon>
        <taxon>Eubacteriales</taxon>
        <taxon>Clostridiaceae</taxon>
        <taxon>Clostridium</taxon>
    </lineage>
</organism>
<comment type="PTM">
    <text evidence="1">The N-terminus is cleaved by ribosomal processing cysteine protease Prp.</text>
</comment>
<comment type="similarity">
    <text evidence="2">Belongs to the bacterial ribosomal protein bL27 family.</text>
</comment>
<accession>A7GHK3</accession>
<evidence type="ECO:0000250" key="1">
    <source>
        <dbReference type="UniProtKB" id="Q2FXT0"/>
    </source>
</evidence>
<evidence type="ECO:0000255" key="2">
    <source>
        <dbReference type="HAMAP-Rule" id="MF_00539"/>
    </source>
</evidence>
<evidence type="ECO:0000305" key="3"/>
<sequence length="100" mass="10882">MLVMNLQLFAHKKGVGSSKNGRDSEAKRLGVKCSDGQFVLAGNILVRQRGTKIHPGLNVGRGGDDTLFAKIDGVVKYERLGRDKKKASVYPVEVEEVVAE</sequence>
<gene>
    <name evidence="2" type="primary">rpmA</name>
    <name type="ordered locus">CLI_3041</name>
</gene>
<reference key="1">
    <citation type="submission" date="2007-06" db="EMBL/GenBank/DDBJ databases">
        <authorList>
            <person name="Brinkac L.M."/>
            <person name="Daugherty S."/>
            <person name="Dodson R.J."/>
            <person name="Madupu R."/>
            <person name="Brown J.L."/>
            <person name="Bruce D."/>
            <person name="Detter C."/>
            <person name="Munk C."/>
            <person name="Smith L.A."/>
            <person name="Smith T.J."/>
            <person name="White O."/>
            <person name="Brettin T.S."/>
        </authorList>
    </citation>
    <scope>NUCLEOTIDE SEQUENCE [LARGE SCALE GENOMIC DNA]</scope>
    <source>
        <strain>Langeland / NCTC 10281 / Type F</strain>
    </source>
</reference>
<dbReference type="EMBL" id="CP000728">
    <property type="protein sequence ID" value="ABS41605.1"/>
    <property type="molecule type" value="Genomic_DNA"/>
</dbReference>
<dbReference type="RefSeq" id="WP_003357774.1">
    <property type="nucleotide sequence ID" value="NC_009699.1"/>
</dbReference>
<dbReference type="SMR" id="A7GHK3"/>
<dbReference type="GeneID" id="92939708"/>
<dbReference type="KEGG" id="cbf:CLI_3041"/>
<dbReference type="HOGENOM" id="CLU_095424_4_0_9"/>
<dbReference type="Proteomes" id="UP000002410">
    <property type="component" value="Chromosome"/>
</dbReference>
<dbReference type="GO" id="GO:0022625">
    <property type="term" value="C:cytosolic large ribosomal subunit"/>
    <property type="evidence" value="ECO:0007669"/>
    <property type="project" value="TreeGrafter"/>
</dbReference>
<dbReference type="GO" id="GO:0003735">
    <property type="term" value="F:structural constituent of ribosome"/>
    <property type="evidence" value="ECO:0007669"/>
    <property type="project" value="InterPro"/>
</dbReference>
<dbReference type="GO" id="GO:0006412">
    <property type="term" value="P:translation"/>
    <property type="evidence" value="ECO:0007669"/>
    <property type="project" value="UniProtKB-UniRule"/>
</dbReference>
<dbReference type="FunFam" id="2.40.50.100:FF:000004">
    <property type="entry name" value="50S ribosomal protein L27"/>
    <property type="match status" value="1"/>
</dbReference>
<dbReference type="Gene3D" id="2.40.50.100">
    <property type="match status" value="1"/>
</dbReference>
<dbReference type="HAMAP" id="MF_00539">
    <property type="entry name" value="Ribosomal_bL27"/>
    <property type="match status" value="1"/>
</dbReference>
<dbReference type="InterPro" id="IPR001684">
    <property type="entry name" value="Ribosomal_bL27"/>
</dbReference>
<dbReference type="InterPro" id="IPR018261">
    <property type="entry name" value="Ribosomal_bL27_CS"/>
</dbReference>
<dbReference type="NCBIfam" id="TIGR00062">
    <property type="entry name" value="L27"/>
    <property type="match status" value="1"/>
</dbReference>
<dbReference type="PANTHER" id="PTHR15893:SF0">
    <property type="entry name" value="LARGE RIBOSOMAL SUBUNIT PROTEIN BL27M"/>
    <property type="match status" value="1"/>
</dbReference>
<dbReference type="PANTHER" id="PTHR15893">
    <property type="entry name" value="RIBOSOMAL PROTEIN L27"/>
    <property type="match status" value="1"/>
</dbReference>
<dbReference type="Pfam" id="PF01016">
    <property type="entry name" value="Ribosomal_L27"/>
    <property type="match status" value="1"/>
</dbReference>
<dbReference type="PRINTS" id="PR00063">
    <property type="entry name" value="RIBOSOMALL27"/>
</dbReference>
<dbReference type="SUPFAM" id="SSF110324">
    <property type="entry name" value="Ribosomal L27 protein-like"/>
    <property type="match status" value="1"/>
</dbReference>
<dbReference type="PROSITE" id="PS00831">
    <property type="entry name" value="RIBOSOMAL_L27"/>
    <property type="match status" value="1"/>
</dbReference>
<protein>
    <recommendedName>
        <fullName evidence="2">Large ribosomal subunit protein bL27</fullName>
    </recommendedName>
    <alternativeName>
        <fullName evidence="3">50S ribosomal protein L27</fullName>
    </alternativeName>
</protein>